<dbReference type="EC" id="2.7.1.4"/>
<dbReference type="EMBL" id="AF096373">
    <property type="protein sequence ID" value="AAC62803.1"/>
    <property type="molecule type" value="Genomic_DNA"/>
</dbReference>
<dbReference type="EMBL" id="AL049488">
    <property type="protein sequence ID" value="CAB39779.1"/>
    <property type="molecule type" value="Genomic_DNA"/>
</dbReference>
<dbReference type="EMBL" id="AL161516">
    <property type="protein sequence ID" value="CAB78149.1"/>
    <property type="molecule type" value="Genomic_DNA"/>
</dbReference>
<dbReference type="EMBL" id="CP002687">
    <property type="protein sequence ID" value="AEE82860.1"/>
    <property type="molecule type" value="Genomic_DNA"/>
</dbReference>
<dbReference type="EMBL" id="DQ446815">
    <property type="protein sequence ID" value="ABE66053.1"/>
    <property type="molecule type" value="mRNA"/>
</dbReference>
<dbReference type="EMBL" id="DQ653188">
    <property type="protein sequence ID" value="ABK28625.1"/>
    <property type="status" value="ALT_SEQ"/>
    <property type="molecule type" value="mRNA"/>
</dbReference>
<dbReference type="PIR" id="T01971">
    <property type="entry name" value="T01971"/>
</dbReference>
<dbReference type="RefSeq" id="NP_192764.1">
    <property type="nucleotide sequence ID" value="NM_117094.3"/>
</dbReference>
<dbReference type="SMR" id="O82616"/>
<dbReference type="FunCoup" id="O82616">
    <property type="interactions" value="325"/>
</dbReference>
<dbReference type="STRING" id="3702.O82616"/>
<dbReference type="GlyGen" id="O82616">
    <property type="glycosylation" value="1 site"/>
</dbReference>
<dbReference type="iPTMnet" id="O82616"/>
<dbReference type="PaxDb" id="3702-AT4G10260.1"/>
<dbReference type="ProteomicsDB" id="232715"/>
<dbReference type="EnsemblPlants" id="AT4G10260.1">
    <property type="protein sequence ID" value="AT4G10260.1"/>
    <property type="gene ID" value="AT4G10260"/>
</dbReference>
<dbReference type="GeneID" id="826617"/>
<dbReference type="Gramene" id="AT4G10260.1">
    <property type="protein sequence ID" value="AT4G10260.1"/>
    <property type="gene ID" value="AT4G10260"/>
</dbReference>
<dbReference type="KEGG" id="ath:AT4G10260"/>
<dbReference type="Araport" id="AT4G10260"/>
<dbReference type="TAIR" id="AT4G10260">
    <property type="gene designation" value="FRK4"/>
</dbReference>
<dbReference type="eggNOG" id="KOG2855">
    <property type="taxonomic scope" value="Eukaryota"/>
</dbReference>
<dbReference type="HOGENOM" id="CLU_027634_6_1_1"/>
<dbReference type="InParanoid" id="O82616"/>
<dbReference type="OMA" id="DDQHGRF"/>
<dbReference type="OrthoDB" id="415590at2759"/>
<dbReference type="PhylomeDB" id="O82616"/>
<dbReference type="BioCyc" id="ARA:AT4G10260-MONOMER"/>
<dbReference type="BRENDA" id="2.7.1.4">
    <property type="organism ID" value="399"/>
</dbReference>
<dbReference type="UniPathway" id="UPA00152"/>
<dbReference type="PRO" id="PR:O82616"/>
<dbReference type="Proteomes" id="UP000006548">
    <property type="component" value="Chromosome 4"/>
</dbReference>
<dbReference type="ExpressionAtlas" id="O82616">
    <property type="expression patterns" value="baseline and differential"/>
</dbReference>
<dbReference type="GO" id="GO:0005829">
    <property type="term" value="C:cytosol"/>
    <property type="evidence" value="ECO:0000314"/>
    <property type="project" value="TAIR"/>
</dbReference>
<dbReference type="GO" id="GO:0005524">
    <property type="term" value="F:ATP binding"/>
    <property type="evidence" value="ECO:0007669"/>
    <property type="project" value="UniProtKB-KW"/>
</dbReference>
<dbReference type="GO" id="GO:0008865">
    <property type="term" value="F:fructokinase activity"/>
    <property type="evidence" value="ECO:0000314"/>
    <property type="project" value="TAIR"/>
</dbReference>
<dbReference type="GO" id="GO:0006000">
    <property type="term" value="P:fructose metabolic process"/>
    <property type="evidence" value="ECO:0000314"/>
    <property type="project" value="TAIR"/>
</dbReference>
<dbReference type="GO" id="GO:0019252">
    <property type="term" value="P:starch biosynthetic process"/>
    <property type="evidence" value="ECO:0007669"/>
    <property type="project" value="UniProtKB-UniPathway"/>
</dbReference>
<dbReference type="CDD" id="cd01167">
    <property type="entry name" value="bac_FRK"/>
    <property type="match status" value="1"/>
</dbReference>
<dbReference type="FunFam" id="3.40.1190.20:FF:000005">
    <property type="entry name" value="Probable fructokinase-2"/>
    <property type="match status" value="1"/>
</dbReference>
<dbReference type="Gene3D" id="3.40.1190.20">
    <property type="match status" value="1"/>
</dbReference>
<dbReference type="InterPro" id="IPR002173">
    <property type="entry name" value="Carboh/pur_kinase_PfkB_CS"/>
</dbReference>
<dbReference type="InterPro" id="IPR050306">
    <property type="entry name" value="PfkB_Carbo_kinase"/>
</dbReference>
<dbReference type="InterPro" id="IPR011611">
    <property type="entry name" value="PfkB_dom"/>
</dbReference>
<dbReference type="InterPro" id="IPR002139">
    <property type="entry name" value="Ribo/fructo_kinase"/>
</dbReference>
<dbReference type="InterPro" id="IPR029056">
    <property type="entry name" value="Ribokinase-like"/>
</dbReference>
<dbReference type="PANTHER" id="PTHR43085:SF6">
    <property type="entry name" value="FRUCTOKINASE-5-RELATED"/>
    <property type="match status" value="1"/>
</dbReference>
<dbReference type="PANTHER" id="PTHR43085">
    <property type="entry name" value="HEXOKINASE FAMILY MEMBER"/>
    <property type="match status" value="1"/>
</dbReference>
<dbReference type="Pfam" id="PF00294">
    <property type="entry name" value="PfkB"/>
    <property type="match status" value="1"/>
</dbReference>
<dbReference type="PRINTS" id="PR00990">
    <property type="entry name" value="RIBOKINASE"/>
</dbReference>
<dbReference type="SUPFAM" id="SSF53613">
    <property type="entry name" value="Ribokinase-like"/>
    <property type="match status" value="1"/>
</dbReference>
<dbReference type="PROSITE" id="PS00583">
    <property type="entry name" value="PFKB_KINASES_1"/>
    <property type="match status" value="1"/>
</dbReference>
<dbReference type="PROSITE" id="PS00584">
    <property type="entry name" value="PFKB_KINASES_2"/>
    <property type="match status" value="1"/>
</dbReference>
<evidence type="ECO:0000250" key="1">
    <source>
        <dbReference type="UniProtKB" id="Q6XZ79"/>
    </source>
</evidence>
<evidence type="ECO:0000305" key="2"/>
<evidence type="ECO:0000312" key="3">
    <source>
        <dbReference type="Araport" id="AT4G10260"/>
    </source>
</evidence>
<evidence type="ECO:0000312" key="4">
    <source>
        <dbReference type="EMBL" id="AAC62803.1"/>
    </source>
</evidence>
<evidence type="ECO:0000312" key="5">
    <source>
        <dbReference type="EMBL" id="CAB39779.1"/>
    </source>
</evidence>
<protein>
    <recommendedName>
        <fullName>Probable fructokinase-5</fullName>
        <ecNumber>2.7.1.4</ecNumber>
    </recommendedName>
</protein>
<reference key="1">
    <citation type="journal article" date="1999" name="Nature">
        <title>Sequence and analysis of chromosome 4 of the plant Arabidopsis thaliana.</title>
        <authorList>
            <person name="Mayer K.F.X."/>
            <person name="Schueller C."/>
            <person name="Wambutt R."/>
            <person name="Murphy G."/>
            <person name="Volckaert G."/>
            <person name="Pohl T."/>
            <person name="Duesterhoeft A."/>
            <person name="Stiekema W."/>
            <person name="Entian K.-D."/>
            <person name="Terryn N."/>
            <person name="Harris B."/>
            <person name="Ansorge W."/>
            <person name="Brandt P."/>
            <person name="Grivell L.A."/>
            <person name="Rieger M."/>
            <person name="Weichselgartner M."/>
            <person name="de Simone V."/>
            <person name="Obermaier B."/>
            <person name="Mache R."/>
            <person name="Mueller M."/>
            <person name="Kreis M."/>
            <person name="Delseny M."/>
            <person name="Puigdomenech P."/>
            <person name="Watson M."/>
            <person name="Schmidtheini T."/>
            <person name="Reichert B."/>
            <person name="Portetelle D."/>
            <person name="Perez-Alonso M."/>
            <person name="Boutry M."/>
            <person name="Bancroft I."/>
            <person name="Vos P."/>
            <person name="Hoheisel J."/>
            <person name="Zimmermann W."/>
            <person name="Wedler H."/>
            <person name="Ridley P."/>
            <person name="Langham S.-A."/>
            <person name="McCullagh B."/>
            <person name="Bilham L."/>
            <person name="Robben J."/>
            <person name="van der Schueren J."/>
            <person name="Grymonprez B."/>
            <person name="Chuang Y.-J."/>
            <person name="Vandenbussche F."/>
            <person name="Braeken M."/>
            <person name="Weltjens I."/>
            <person name="Voet M."/>
            <person name="Bastiaens I."/>
            <person name="Aert R."/>
            <person name="Defoor E."/>
            <person name="Weitzenegger T."/>
            <person name="Bothe G."/>
            <person name="Ramsperger U."/>
            <person name="Hilbert H."/>
            <person name="Braun M."/>
            <person name="Holzer E."/>
            <person name="Brandt A."/>
            <person name="Peters S."/>
            <person name="van Staveren M."/>
            <person name="Dirkse W."/>
            <person name="Mooijman P."/>
            <person name="Klein Lankhorst R."/>
            <person name="Rose M."/>
            <person name="Hauf J."/>
            <person name="Koetter P."/>
            <person name="Berneiser S."/>
            <person name="Hempel S."/>
            <person name="Feldpausch M."/>
            <person name="Lamberth S."/>
            <person name="Van den Daele H."/>
            <person name="De Keyser A."/>
            <person name="Buysshaert C."/>
            <person name="Gielen J."/>
            <person name="Villarroel R."/>
            <person name="De Clercq R."/>
            <person name="van Montagu M."/>
            <person name="Rogers J."/>
            <person name="Cronin A."/>
            <person name="Quail M.A."/>
            <person name="Bray-Allen S."/>
            <person name="Clark L."/>
            <person name="Doggett J."/>
            <person name="Hall S."/>
            <person name="Kay M."/>
            <person name="Lennard N."/>
            <person name="McLay K."/>
            <person name="Mayes R."/>
            <person name="Pettett A."/>
            <person name="Rajandream M.A."/>
            <person name="Lyne M."/>
            <person name="Benes V."/>
            <person name="Rechmann S."/>
            <person name="Borkova D."/>
            <person name="Bloecker H."/>
            <person name="Scharfe M."/>
            <person name="Grimm M."/>
            <person name="Loehnert T.-H."/>
            <person name="Dose S."/>
            <person name="de Haan M."/>
            <person name="Maarse A.C."/>
            <person name="Schaefer M."/>
            <person name="Mueller-Auer S."/>
            <person name="Gabel C."/>
            <person name="Fuchs M."/>
            <person name="Fartmann B."/>
            <person name="Granderath K."/>
            <person name="Dauner D."/>
            <person name="Herzl A."/>
            <person name="Neumann S."/>
            <person name="Argiriou A."/>
            <person name="Vitale D."/>
            <person name="Liguori R."/>
            <person name="Piravandi E."/>
            <person name="Massenet O."/>
            <person name="Quigley F."/>
            <person name="Clabauld G."/>
            <person name="Muendlein A."/>
            <person name="Felber R."/>
            <person name="Schnabl S."/>
            <person name="Hiller R."/>
            <person name="Schmidt W."/>
            <person name="Lecharny A."/>
            <person name="Aubourg S."/>
            <person name="Chefdor F."/>
            <person name="Cooke R."/>
            <person name="Berger C."/>
            <person name="Monfort A."/>
            <person name="Casacuberta E."/>
            <person name="Gibbons T."/>
            <person name="Weber N."/>
            <person name="Vandenbol M."/>
            <person name="Bargues M."/>
            <person name="Terol J."/>
            <person name="Torres A."/>
            <person name="Perez-Perez A."/>
            <person name="Purnelle B."/>
            <person name="Bent E."/>
            <person name="Johnson S."/>
            <person name="Tacon D."/>
            <person name="Jesse T."/>
            <person name="Heijnen L."/>
            <person name="Schwarz S."/>
            <person name="Scholler P."/>
            <person name="Heber S."/>
            <person name="Francs P."/>
            <person name="Bielke C."/>
            <person name="Frishman D."/>
            <person name="Haase D."/>
            <person name="Lemcke K."/>
            <person name="Mewes H.-W."/>
            <person name="Stocker S."/>
            <person name="Zaccaria P."/>
            <person name="Bevan M."/>
            <person name="Wilson R.K."/>
            <person name="de la Bastide M."/>
            <person name="Habermann K."/>
            <person name="Parnell L."/>
            <person name="Dedhia N."/>
            <person name="Gnoj L."/>
            <person name="Schutz K."/>
            <person name="Huang E."/>
            <person name="Spiegel L."/>
            <person name="Sekhon M."/>
            <person name="Murray J."/>
            <person name="Sheet P."/>
            <person name="Cordes M."/>
            <person name="Abu-Threideh J."/>
            <person name="Stoneking T."/>
            <person name="Kalicki J."/>
            <person name="Graves T."/>
            <person name="Harmon G."/>
            <person name="Edwards J."/>
            <person name="Latreille P."/>
            <person name="Courtney L."/>
            <person name="Cloud J."/>
            <person name="Abbott A."/>
            <person name="Scott K."/>
            <person name="Johnson D."/>
            <person name="Minx P."/>
            <person name="Bentley D."/>
            <person name="Fulton B."/>
            <person name="Miller N."/>
            <person name="Greco T."/>
            <person name="Kemp K."/>
            <person name="Kramer J."/>
            <person name="Fulton L."/>
            <person name="Mardis E."/>
            <person name="Dante M."/>
            <person name="Pepin K."/>
            <person name="Hillier L.W."/>
            <person name="Nelson J."/>
            <person name="Spieth J."/>
            <person name="Ryan E."/>
            <person name="Andrews S."/>
            <person name="Geisel C."/>
            <person name="Layman D."/>
            <person name="Du H."/>
            <person name="Ali J."/>
            <person name="Berghoff A."/>
            <person name="Jones K."/>
            <person name="Drone K."/>
            <person name="Cotton M."/>
            <person name="Joshu C."/>
            <person name="Antonoiu B."/>
            <person name="Zidanic M."/>
            <person name="Strong C."/>
            <person name="Sun H."/>
            <person name="Lamar B."/>
            <person name="Yordan C."/>
            <person name="Ma P."/>
            <person name="Zhong J."/>
            <person name="Preston R."/>
            <person name="Vil D."/>
            <person name="Shekher M."/>
            <person name="Matero A."/>
            <person name="Shah R."/>
            <person name="Swaby I.K."/>
            <person name="O'Shaughnessy A."/>
            <person name="Rodriguez M."/>
            <person name="Hoffman J."/>
            <person name="Till S."/>
            <person name="Granat S."/>
            <person name="Shohdy N."/>
            <person name="Hasegawa A."/>
            <person name="Hameed A."/>
            <person name="Lodhi M."/>
            <person name="Johnson A."/>
            <person name="Chen E."/>
            <person name="Marra M.A."/>
            <person name="Martienssen R."/>
            <person name="McCombie W.R."/>
        </authorList>
    </citation>
    <scope>NUCLEOTIDE SEQUENCE [LARGE SCALE GENOMIC DNA]</scope>
    <source>
        <strain>cv. Columbia</strain>
    </source>
</reference>
<reference key="2">
    <citation type="journal article" date="2017" name="Plant J.">
        <title>Araport11: a complete reannotation of the Arabidopsis thaliana reference genome.</title>
        <authorList>
            <person name="Cheng C.Y."/>
            <person name="Krishnakumar V."/>
            <person name="Chan A.P."/>
            <person name="Thibaud-Nissen F."/>
            <person name="Schobel S."/>
            <person name="Town C.D."/>
        </authorList>
    </citation>
    <scope>GENOME REANNOTATION</scope>
    <source>
        <strain>cv. Columbia</strain>
    </source>
</reference>
<reference key="3">
    <citation type="journal article" date="2006" name="Plant Biotechnol. J.">
        <title>Simultaneous high-throughput recombinational cloning of open reading frames in closed and open configurations.</title>
        <authorList>
            <person name="Underwood B.A."/>
            <person name="Vanderhaeghen R."/>
            <person name="Whitford R."/>
            <person name="Town C.D."/>
            <person name="Hilson P."/>
        </authorList>
    </citation>
    <scope>NUCLEOTIDE SEQUENCE [LARGE SCALE MRNA]</scope>
    <source>
        <strain>cv. Columbia</strain>
    </source>
</reference>
<feature type="chain" id="PRO_0000237605" description="Probable fructokinase-5">
    <location>
        <begin position="1"/>
        <end position="324"/>
    </location>
</feature>
<proteinExistence type="evidence at transcript level"/>
<comment type="function">
    <text evidence="1">May play an important role in maintaining the flux of carbon towards starch formation.</text>
</comment>
<comment type="catalytic activity">
    <reaction>
        <text>D-fructose + ATP = D-fructose 6-phosphate + ADP + H(+)</text>
        <dbReference type="Rhea" id="RHEA:16125"/>
        <dbReference type="ChEBI" id="CHEBI:15378"/>
        <dbReference type="ChEBI" id="CHEBI:30616"/>
        <dbReference type="ChEBI" id="CHEBI:37721"/>
        <dbReference type="ChEBI" id="CHEBI:61527"/>
        <dbReference type="ChEBI" id="CHEBI:456216"/>
        <dbReference type="EC" id="2.7.1.4"/>
    </reaction>
</comment>
<comment type="pathway">
    <text>Glycan biosynthesis; starch biosynthesis.</text>
</comment>
<comment type="similarity">
    <text evidence="2">Belongs to the carbohydrate kinase PfkB family.</text>
</comment>
<comment type="sequence caution">
    <conflict type="erroneous termination">
        <sequence resource="EMBL-CDS" id="ABK28625"/>
    </conflict>
    <text>Extended C-terminus.</text>
</comment>
<accession>O82616</accession>
<accession>A0MF62</accession>
<keyword id="KW-0067">ATP-binding</keyword>
<keyword id="KW-0119">Carbohydrate metabolism</keyword>
<keyword id="KW-0418">Kinase</keyword>
<keyword id="KW-0547">Nucleotide-binding</keyword>
<keyword id="KW-1185">Reference proteome</keyword>
<keyword id="KW-0808">Transferase</keyword>
<gene>
    <name evidence="3" type="ordered locus">At4g10260</name>
    <name evidence="5" type="ORF">F24G24.60</name>
    <name evidence="4" type="ORF">T9A4.3</name>
</gene>
<organism>
    <name type="scientific">Arabidopsis thaliana</name>
    <name type="common">Mouse-ear cress</name>
    <dbReference type="NCBI Taxonomy" id="3702"/>
    <lineage>
        <taxon>Eukaryota</taxon>
        <taxon>Viridiplantae</taxon>
        <taxon>Streptophyta</taxon>
        <taxon>Embryophyta</taxon>
        <taxon>Tracheophyta</taxon>
        <taxon>Spermatophyta</taxon>
        <taxon>Magnoliopsida</taxon>
        <taxon>eudicotyledons</taxon>
        <taxon>Gunneridae</taxon>
        <taxon>Pentapetalae</taxon>
        <taxon>rosids</taxon>
        <taxon>malvids</taxon>
        <taxon>Brassicales</taxon>
        <taxon>Brassicaceae</taxon>
        <taxon>Camelineae</taxon>
        <taxon>Arabidopsis</taxon>
    </lineage>
</organism>
<sequence length="324" mass="34688">MANTPLIVSFGEMLIDFVPDTSGVSLAESTGFLKAPGGAPANVACAITKLGGKSAFIGKFGDDEFGHMLVNILKKNGVNSEGVCFDTNARTALAFVTLKKDGEREFMFYRNPSADMLLKESELNKDLIKKAKIFHYGSISLISEPCRTAHMAAMKTAKDAGVLLSYDPNVRLPLWPSTEAAIEGIKSIWNEADIIKVSDDEVTFLTRGDAEKDDVVLSLMHDKLKLLIVTDGEKGCRYYTKKFKGRVPGYAVKAVDTTGAGDSFVGAFLVSLGKDGSILDDEGKLKEALAFANACGAVCTTQKGAIPALPTPADAQKLMKSKSK</sequence>
<name>SCRK5_ARATH</name>